<comment type="function">
    <text evidence="1">Catalyzes the acyloin condensation reaction between C atoms 2 and 3 of pyruvate and glyceraldehyde 3-phosphate to yield 1-deoxy-D-xylulose-5-phosphate (DXP).</text>
</comment>
<comment type="catalytic activity">
    <reaction evidence="1">
        <text>D-glyceraldehyde 3-phosphate + pyruvate + H(+) = 1-deoxy-D-xylulose 5-phosphate + CO2</text>
        <dbReference type="Rhea" id="RHEA:12605"/>
        <dbReference type="ChEBI" id="CHEBI:15361"/>
        <dbReference type="ChEBI" id="CHEBI:15378"/>
        <dbReference type="ChEBI" id="CHEBI:16526"/>
        <dbReference type="ChEBI" id="CHEBI:57792"/>
        <dbReference type="ChEBI" id="CHEBI:59776"/>
        <dbReference type="EC" id="2.2.1.7"/>
    </reaction>
</comment>
<comment type="cofactor">
    <cofactor evidence="1">
        <name>Mg(2+)</name>
        <dbReference type="ChEBI" id="CHEBI:18420"/>
    </cofactor>
    <text evidence="1">Binds 1 Mg(2+) ion per subunit.</text>
</comment>
<comment type="cofactor">
    <cofactor evidence="1">
        <name>thiamine diphosphate</name>
        <dbReference type="ChEBI" id="CHEBI:58937"/>
    </cofactor>
    <text evidence="1">Binds 1 thiamine pyrophosphate per subunit.</text>
</comment>
<comment type="pathway">
    <text evidence="1">Metabolic intermediate biosynthesis; 1-deoxy-D-xylulose 5-phosphate biosynthesis; 1-deoxy-D-xylulose 5-phosphate from D-glyceraldehyde 3-phosphate and pyruvate: step 1/1.</text>
</comment>
<comment type="subunit">
    <text evidence="1">Homodimer.</text>
</comment>
<comment type="similarity">
    <text evidence="1">Belongs to the transketolase family. DXPS subfamily.</text>
</comment>
<sequence>MLQQAQTTSRNTLLDRVDSPKDIRQLTHDDLIILAAEIREKIIDTVSKTGGHLAPSLGVVELTLALHYVFNTPTDKLVWDVGHQSYAHKILTGRRKQFDTLRQYRGMSGFPKRGESDYDAFETGHSSTSISAALGMTLAMDLLQQDNKAIAVIGDGSMTAGMAFEALNHAGHLDKNLIVILNDNEMSISPNVGALSSFLSRKLTGKTMRRVKSHLVEKLQDSDVGENILNVLRKSEESFKSFFTPGMLFEAFKFDYIGPIDGHDIDALISTLNTVRDTAKGPALIHVLTKKGKGYLPAEENPDAFHGVGPFNRQTGKIIKKKGPASYTTVFGQTMLELGKKNKNIVAISAAMVAGTGLTPFSEAYPDRFFDVGIAEQHAITFAAGLASQGMRPVVAIYSSFYQRAMDQIIHDVCIPNLPVTLAIDRAGVVGDDGPTHHGIFDISFLRFIPNLTIMAPKDEAELQQMLVTATGHDGPTAIRYPRGAGEDVSTSQEIESIPILEIGRGELLREGDDILLLPIGNRVYPAMRAAEELAKQGISASVINPRFIKPLDAELICQQAKKTGRIITIEDNTLCSGFGSAVLELLSQKSLYGIKTKILGHPHAFVEHGPQKTLWENSGITSRGIIMAALDLLQKETDPSVANE</sequence>
<keyword id="KW-0414">Isoprene biosynthesis</keyword>
<keyword id="KW-0460">Magnesium</keyword>
<keyword id="KW-0479">Metal-binding</keyword>
<keyword id="KW-1185">Reference proteome</keyword>
<keyword id="KW-0784">Thiamine biosynthesis</keyword>
<keyword id="KW-0786">Thiamine pyrophosphate</keyword>
<keyword id="KW-0808">Transferase</keyword>
<dbReference type="EC" id="2.2.1.7" evidence="1"/>
<dbReference type="EMBL" id="CR522870">
    <property type="protein sequence ID" value="CAG37429.1"/>
    <property type="molecule type" value="Genomic_DNA"/>
</dbReference>
<dbReference type="RefSeq" id="WP_011189941.1">
    <property type="nucleotide sequence ID" value="NC_006138.1"/>
</dbReference>
<dbReference type="SMR" id="Q6AJQ1"/>
<dbReference type="STRING" id="177439.DP2700"/>
<dbReference type="KEGG" id="dps:DP2700"/>
<dbReference type="eggNOG" id="COG1154">
    <property type="taxonomic scope" value="Bacteria"/>
</dbReference>
<dbReference type="HOGENOM" id="CLU_009227_1_4_7"/>
<dbReference type="OrthoDB" id="9803371at2"/>
<dbReference type="UniPathway" id="UPA00064">
    <property type="reaction ID" value="UER00091"/>
</dbReference>
<dbReference type="Proteomes" id="UP000000602">
    <property type="component" value="Chromosome"/>
</dbReference>
<dbReference type="GO" id="GO:0005829">
    <property type="term" value="C:cytosol"/>
    <property type="evidence" value="ECO:0007669"/>
    <property type="project" value="TreeGrafter"/>
</dbReference>
<dbReference type="GO" id="GO:0008661">
    <property type="term" value="F:1-deoxy-D-xylulose-5-phosphate synthase activity"/>
    <property type="evidence" value="ECO:0007669"/>
    <property type="project" value="UniProtKB-UniRule"/>
</dbReference>
<dbReference type="GO" id="GO:0000287">
    <property type="term" value="F:magnesium ion binding"/>
    <property type="evidence" value="ECO:0007669"/>
    <property type="project" value="UniProtKB-UniRule"/>
</dbReference>
<dbReference type="GO" id="GO:0030976">
    <property type="term" value="F:thiamine pyrophosphate binding"/>
    <property type="evidence" value="ECO:0007669"/>
    <property type="project" value="UniProtKB-UniRule"/>
</dbReference>
<dbReference type="GO" id="GO:0052865">
    <property type="term" value="P:1-deoxy-D-xylulose 5-phosphate biosynthetic process"/>
    <property type="evidence" value="ECO:0007669"/>
    <property type="project" value="UniProtKB-UniPathway"/>
</dbReference>
<dbReference type="GO" id="GO:0019288">
    <property type="term" value="P:isopentenyl diphosphate biosynthetic process, methylerythritol 4-phosphate pathway"/>
    <property type="evidence" value="ECO:0007669"/>
    <property type="project" value="TreeGrafter"/>
</dbReference>
<dbReference type="GO" id="GO:0016114">
    <property type="term" value="P:terpenoid biosynthetic process"/>
    <property type="evidence" value="ECO:0007669"/>
    <property type="project" value="UniProtKB-UniRule"/>
</dbReference>
<dbReference type="GO" id="GO:0009228">
    <property type="term" value="P:thiamine biosynthetic process"/>
    <property type="evidence" value="ECO:0007669"/>
    <property type="project" value="UniProtKB-UniRule"/>
</dbReference>
<dbReference type="CDD" id="cd02007">
    <property type="entry name" value="TPP_DXS"/>
    <property type="match status" value="1"/>
</dbReference>
<dbReference type="CDD" id="cd07033">
    <property type="entry name" value="TPP_PYR_DXS_TK_like"/>
    <property type="match status" value="1"/>
</dbReference>
<dbReference type="FunFam" id="3.40.50.970:FF:000005">
    <property type="entry name" value="1-deoxy-D-xylulose-5-phosphate synthase"/>
    <property type="match status" value="1"/>
</dbReference>
<dbReference type="Gene3D" id="3.40.50.920">
    <property type="match status" value="1"/>
</dbReference>
<dbReference type="Gene3D" id="3.40.50.970">
    <property type="match status" value="2"/>
</dbReference>
<dbReference type="HAMAP" id="MF_00315">
    <property type="entry name" value="DXP_synth"/>
    <property type="match status" value="1"/>
</dbReference>
<dbReference type="InterPro" id="IPR005477">
    <property type="entry name" value="Dxylulose-5-P_synthase"/>
</dbReference>
<dbReference type="InterPro" id="IPR029061">
    <property type="entry name" value="THDP-binding"/>
</dbReference>
<dbReference type="InterPro" id="IPR009014">
    <property type="entry name" value="Transketo_C/PFOR_II"/>
</dbReference>
<dbReference type="InterPro" id="IPR005475">
    <property type="entry name" value="Transketolase-like_Pyr-bd"/>
</dbReference>
<dbReference type="InterPro" id="IPR020826">
    <property type="entry name" value="Transketolase_BS"/>
</dbReference>
<dbReference type="InterPro" id="IPR033248">
    <property type="entry name" value="Transketolase_C"/>
</dbReference>
<dbReference type="InterPro" id="IPR049557">
    <property type="entry name" value="Transketolase_CS"/>
</dbReference>
<dbReference type="NCBIfam" id="TIGR00204">
    <property type="entry name" value="dxs"/>
    <property type="match status" value="1"/>
</dbReference>
<dbReference type="NCBIfam" id="NF003933">
    <property type="entry name" value="PRK05444.2-2"/>
    <property type="match status" value="1"/>
</dbReference>
<dbReference type="PANTHER" id="PTHR43322">
    <property type="entry name" value="1-D-DEOXYXYLULOSE 5-PHOSPHATE SYNTHASE-RELATED"/>
    <property type="match status" value="1"/>
</dbReference>
<dbReference type="PANTHER" id="PTHR43322:SF5">
    <property type="entry name" value="1-DEOXY-D-XYLULOSE-5-PHOSPHATE SYNTHASE, CHLOROPLASTIC"/>
    <property type="match status" value="1"/>
</dbReference>
<dbReference type="Pfam" id="PF13292">
    <property type="entry name" value="DXP_synthase_N"/>
    <property type="match status" value="1"/>
</dbReference>
<dbReference type="Pfam" id="PF02779">
    <property type="entry name" value="Transket_pyr"/>
    <property type="match status" value="1"/>
</dbReference>
<dbReference type="Pfam" id="PF02780">
    <property type="entry name" value="Transketolase_C"/>
    <property type="match status" value="1"/>
</dbReference>
<dbReference type="SMART" id="SM00861">
    <property type="entry name" value="Transket_pyr"/>
    <property type="match status" value="1"/>
</dbReference>
<dbReference type="SUPFAM" id="SSF52518">
    <property type="entry name" value="Thiamin diphosphate-binding fold (THDP-binding)"/>
    <property type="match status" value="2"/>
</dbReference>
<dbReference type="SUPFAM" id="SSF52922">
    <property type="entry name" value="TK C-terminal domain-like"/>
    <property type="match status" value="1"/>
</dbReference>
<dbReference type="PROSITE" id="PS00801">
    <property type="entry name" value="TRANSKETOLASE_1"/>
    <property type="match status" value="1"/>
</dbReference>
<dbReference type="PROSITE" id="PS00802">
    <property type="entry name" value="TRANSKETOLASE_2"/>
    <property type="match status" value="1"/>
</dbReference>
<organism>
    <name type="scientific">Desulfotalea psychrophila (strain LSv54 / DSM 12343)</name>
    <dbReference type="NCBI Taxonomy" id="177439"/>
    <lineage>
        <taxon>Bacteria</taxon>
        <taxon>Pseudomonadati</taxon>
        <taxon>Thermodesulfobacteriota</taxon>
        <taxon>Desulfobulbia</taxon>
        <taxon>Desulfobulbales</taxon>
        <taxon>Desulfocapsaceae</taxon>
        <taxon>Desulfotalea</taxon>
    </lineage>
</organism>
<proteinExistence type="inferred from homology"/>
<gene>
    <name evidence="1" type="primary">dxs</name>
    <name type="ordered locus">DP2700</name>
</gene>
<name>DXS_DESPS</name>
<feature type="chain" id="PRO_0000256413" description="1-deoxy-D-xylulose-5-phosphate synthase">
    <location>
        <begin position="1"/>
        <end position="645"/>
    </location>
</feature>
<feature type="binding site" evidence="1">
    <location>
        <position position="83"/>
    </location>
    <ligand>
        <name>thiamine diphosphate</name>
        <dbReference type="ChEBI" id="CHEBI:58937"/>
    </ligand>
</feature>
<feature type="binding site" evidence="1">
    <location>
        <begin position="124"/>
        <end position="126"/>
    </location>
    <ligand>
        <name>thiamine diphosphate</name>
        <dbReference type="ChEBI" id="CHEBI:58937"/>
    </ligand>
</feature>
<feature type="binding site" evidence="1">
    <location>
        <position position="155"/>
    </location>
    <ligand>
        <name>Mg(2+)</name>
        <dbReference type="ChEBI" id="CHEBI:18420"/>
    </ligand>
</feature>
<feature type="binding site" evidence="1">
    <location>
        <begin position="156"/>
        <end position="157"/>
    </location>
    <ligand>
        <name>thiamine diphosphate</name>
        <dbReference type="ChEBI" id="CHEBI:58937"/>
    </ligand>
</feature>
<feature type="binding site" evidence="1">
    <location>
        <position position="184"/>
    </location>
    <ligand>
        <name>Mg(2+)</name>
        <dbReference type="ChEBI" id="CHEBI:18420"/>
    </ligand>
</feature>
<feature type="binding site" evidence="1">
    <location>
        <position position="184"/>
    </location>
    <ligand>
        <name>thiamine diphosphate</name>
        <dbReference type="ChEBI" id="CHEBI:58937"/>
    </ligand>
</feature>
<feature type="binding site" evidence="1">
    <location>
        <position position="295"/>
    </location>
    <ligand>
        <name>thiamine diphosphate</name>
        <dbReference type="ChEBI" id="CHEBI:58937"/>
    </ligand>
</feature>
<feature type="binding site" evidence="1">
    <location>
        <position position="376"/>
    </location>
    <ligand>
        <name>thiamine diphosphate</name>
        <dbReference type="ChEBI" id="CHEBI:58937"/>
    </ligand>
</feature>
<reference key="1">
    <citation type="journal article" date="2004" name="Environ. Microbiol.">
        <title>The genome of Desulfotalea psychrophila, a sulfate-reducing bacterium from permanently cold Arctic sediments.</title>
        <authorList>
            <person name="Rabus R."/>
            <person name="Ruepp A."/>
            <person name="Frickey T."/>
            <person name="Rattei T."/>
            <person name="Fartmann B."/>
            <person name="Stark M."/>
            <person name="Bauer M."/>
            <person name="Zibat A."/>
            <person name="Lombardot T."/>
            <person name="Becker I."/>
            <person name="Amann J."/>
            <person name="Gellner K."/>
            <person name="Teeling H."/>
            <person name="Leuschner W.D."/>
            <person name="Gloeckner F.-O."/>
            <person name="Lupas A.N."/>
            <person name="Amann R."/>
            <person name="Klenk H.-P."/>
        </authorList>
    </citation>
    <scope>NUCLEOTIDE SEQUENCE [LARGE SCALE GENOMIC DNA]</scope>
    <source>
        <strain>DSM 12343 / LSv54</strain>
    </source>
</reference>
<evidence type="ECO:0000255" key="1">
    <source>
        <dbReference type="HAMAP-Rule" id="MF_00315"/>
    </source>
</evidence>
<protein>
    <recommendedName>
        <fullName evidence="1">1-deoxy-D-xylulose-5-phosphate synthase</fullName>
        <ecNumber evidence="1">2.2.1.7</ecNumber>
    </recommendedName>
    <alternativeName>
        <fullName evidence="1">1-deoxyxylulose-5-phosphate synthase</fullName>
        <shortName evidence="1">DXP synthase</shortName>
        <shortName evidence="1">DXPS</shortName>
    </alternativeName>
</protein>
<accession>Q6AJQ1</accession>